<keyword id="KW-0210">Decarboxylase</keyword>
<keyword id="KW-0456">Lyase</keyword>
<organism>
    <name type="scientific">Psilocybe cubensis</name>
    <name type="common">Psychedelic mushroom</name>
    <name type="synonym">Stropharia cubensis</name>
    <dbReference type="NCBI Taxonomy" id="181762"/>
    <lineage>
        <taxon>Eukaryota</taxon>
        <taxon>Fungi</taxon>
        <taxon>Dikarya</taxon>
        <taxon>Basidiomycota</taxon>
        <taxon>Agaricomycotina</taxon>
        <taxon>Agaricomycetes</taxon>
        <taxon>Agaricomycetidae</taxon>
        <taxon>Agaricales</taxon>
        <taxon>Agaricineae</taxon>
        <taxon>Strophariaceae</taxon>
        <taxon>Psilocybe</taxon>
    </lineage>
</organism>
<feature type="chain" id="PRO_0000442157" description="L-tryptophan decarboxylase">
    <location>
        <begin position="1"/>
        <end position="439"/>
    </location>
</feature>
<comment type="function">
    <text evidence="2 3">L-tryptophan decarboxylase; part of the gene cluster that mediates the biosynthesis of psilocybin, a psychotropic tryptamine-derived natural product (PubMed:28763571, PubMed:31150155). The first step in the pathway is the decarboxylation of L-tryptophan to tryptamine by the decarboxylase psiD (PubMed:28763571). 4-hydroxy-L-tryptophan is accepted as substrate by psiD as well (PubMed:28763571, PubMed:31150155). The cytochrome P450 monooxygenase psiH then converts tryptamine to 4-hydroxytryptamine (PubMed:28763571). The kinase psiK catalyzes the 4-O-phosphorylation step by converting 4-hydroxytryptamine into norbaeocystin (PubMed:28763571, PubMed:31150155). The methyltransferase psiM then catalyzes iterative methyl transfer to the amino group of norbaeocystin to yield psilocybin via a monomethylated intermediate, baeocystin (PubMed:28763571, PubMed:31150155). 4-hydroxy-6-methyl-l-tryptophancan also be converted the decarboxylase PsiD, kinase PsiK, and methyltransferase PsiM into respectively 6-methyl-norbaeocystin, 6-methylbaeocystin, and 6-methylpsilocybin (PubMed:31150155).</text>
</comment>
<comment type="catalytic activity">
    <reaction evidence="2 3">
        <text>L-tryptophan + H(+) = tryptamine + CO2</text>
        <dbReference type="Rhea" id="RHEA:30339"/>
        <dbReference type="ChEBI" id="CHEBI:15378"/>
        <dbReference type="ChEBI" id="CHEBI:16526"/>
        <dbReference type="ChEBI" id="CHEBI:57887"/>
        <dbReference type="ChEBI" id="CHEBI:57912"/>
        <dbReference type="EC" id="4.1.1.105"/>
    </reaction>
    <physiologicalReaction direction="left-to-right" evidence="2 3">
        <dbReference type="Rhea" id="RHEA:30340"/>
    </physiologicalReaction>
</comment>
<comment type="pathway">
    <text evidence="2">Secondary metabolite biosynthesis.</text>
</comment>
<comment type="biotechnology">
    <text evidence="1">The pharmaceutical interesting psilocybin as a treatment option against depression and anxiety is being investigated in advanced clinical trials.</text>
</comment>
<comment type="similarity">
    <text evidence="5">Belongs to the phosphatidylserine decarboxylase family.</text>
</comment>
<comment type="online information" name="Protein Spotlight">
    <link uri="https://www.proteinspotlight.org/back_issues/198/"/>
    <text>When the mind bends - Issue 198 of December 2017</text>
</comment>
<protein>
    <recommendedName>
        <fullName evidence="4">L-tryptophan decarboxylase</fullName>
        <ecNumber evidence="2 3">4.1.1.105</ecNumber>
    </recommendedName>
    <alternativeName>
        <fullName evidence="4">Psilocybin biosynthesis decarboxylase</fullName>
    </alternativeName>
</protein>
<dbReference type="EC" id="4.1.1.105" evidence="2 3"/>
<dbReference type="EMBL" id="KY984101">
    <property type="protein sequence ID" value="ASU62239.1"/>
    <property type="molecule type" value="mRNA"/>
</dbReference>
<dbReference type="SMR" id="P0DPA6"/>
<dbReference type="KEGG" id="ag:ASU62239"/>
<dbReference type="GO" id="GO:0005739">
    <property type="term" value="C:mitochondrion"/>
    <property type="evidence" value="ECO:0007669"/>
    <property type="project" value="TreeGrafter"/>
</dbReference>
<dbReference type="GO" id="GO:0036469">
    <property type="term" value="F:L-tryptophan decarboxylase activity"/>
    <property type="evidence" value="ECO:0000314"/>
    <property type="project" value="UniProt"/>
</dbReference>
<dbReference type="GO" id="GO:0004609">
    <property type="term" value="F:phosphatidylserine decarboxylase activity"/>
    <property type="evidence" value="ECO:0007669"/>
    <property type="project" value="InterPro"/>
</dbReference>
<dbReference type="GO" id="GO:0006646">
    <property type="term" value="P:phosphatidylethanolamine biosynthetic process"/>
    <property type="evidence" value="ECO:0007669"/>
    <property type="project" value="TreeGrafter"/>
</dbReference>
<dbReference type="GO" id="GO:0140380">
    <property type="term" value="P:psilocybin biosynthetic process"/>
    <property type="evidence" value="ECO:0000314"/>
    <property type="project" value="GO_Central"/>
</dbReference>
<dbReference type="InterPro" id="IPR003817">
    <property type="entry name" value="PS_Dcarbxylase"/>
</dbReference>
<dbReference type="InterPro" id="IPR022237">
    <property type="entry name" value="PsiD-like"/>
</dbReference>
<dbReference type="PANTHER" id="PTHR10067">
    <property type="entry name" value="PHOSPHATIDYLSERINE DECARBOXYLASE"/>
    <property type="match status" value="1"/>
</dbReference>
<dbReference type="PANTHER" id="PTHR10067:SF9">
    <property type="entry name" value="PHOSPHATIDYLSERINE DECARBOXYLASE FAMILY PROTEIN (AFU_ORTHOLOGUE AFUA_7G01730)"/>
    <property type="match status" value="1"/>
</dbReference>
<dbReference type="Pfam" id="PF02666">
    <property type="entry name" value="PS_Dcarbxylase"/>
    <property type="match status" value="1"/>
</dbReference>
<dbReference type="Pfam" id="PF12588">
    <property type="entry name" value="PSDC"/>
    <property type="match status" value="1"/>
</dbReference>
<evidence type="ECO:0000269" key="1">
    <source>
    </source>
</evidence>
<evidence type="ECO:0000269" key="2">
    <source>
    </source>
</evidence>
<evidence type="ECO:0000269" key="3">
    <source>
    </source>
</evidence>
<evidence type="ECO:0000303" key="4">
    <source>
    </source>
</evidence>
<evidence type="ECO:0000305" key="5"/>
<sequence length="439" mass="49655">MQVIPACNSAAIRSLCPTPESFRNMGWLSVSDAVYSEFIGELATRASNRNYSNEFGLMQPIQEFKAFIESDPVVHQEFIDMFEGIQDSPRNYQELCNMFNDIFRKAPVYGDLGPPVYMIMAKLMNTRAGFSAFTRQRLNLHFKKLFDTWGLFLSSKDSRNVLVADQFDDRHCGWLNERALSAMVKHYNGRAFDEVFLCDKNAPYYGFNSYDDFFNRRFRNRDIDRPVVGGVNNTTLISAACESLSYNVSYDVQSLDTLVFKGETYSLKHLLNNDPFTPQFEHGSILQGFLNVTAYHRWHAPVNGTIVKIINVPGTYFAQAPSTIGDPIPDNDYDPPPYLKSLVYFSNIAARQIMFIEADNKEIGLIFLVFIGMTEISTCEATVSEGQHVNRGDDLGMFHFGGSSFALGLRKDCRAEIVEKFTEPGTVIRINEVVAALKA</sequence>
<name>PSID_PSICU</name>
<proteinExistence type="evidence at protein level"/>
<reference key="1">
    <citation type="journal article" date="2017" name="Angew. Chem. Int. Ed.">
        <title>Enzymatic synthesis of psilocybin.</title>
        <authorList>
            <person name="Fricke J."/>
            <person name="Blei F."/>
            <person name="Hoffmeister D."/>
        </authorList>
    </citation>
    <scope>NUCLEOTIDE SEQUENCE [MRNA]</scope>
    <scope>IDENTIFICATION</scope>
    <scope>FUNCTION</scope>
    <scope>CATALYTIC ACTIVITY</scope>
    <scope>PATHWAY</scope>
</reference>
<reference key="2">
    <citation type="journal article" date="2016" name="J. Psychopharmacol.">
        <title>Rapid and sustained symptom reduction following psilocybin treatment for anxiety and depression in patients with life-threatening cancer: a randomized controlled trial.</title>
        <authorList>
            <person name="Ross S."/>
            <person name="Bossis A."/>
            <person name="Guss J."/>
            <person name="Agin-Liebes G."/>
            <person name="Malone T."/>
            <person name="Cohen B."/>
            <person name="Mennenga S.E."/>
            <person name="Belser A."/>
            <person name="Kalliontzi K."/>
            <person name="Babb J."/>
            <person name="Su Z."/>
            <person name="Corby P."/>
            <person name="Schmidt B.L."/>
        </authorList>
    </citation>
    <scope>BIOTECHNOLOGY</scope>
</reference>
<reference key="3">
    <citation type="journal article" date="2019" name="ChemBioChem">
        <title>Enzymatic route toward 6-methylated baeocystin and psilocybin.</title>
        <authorList>
            <person name="Fricke J."/>
            <person name="Sherwood A."/>
            <person name="Kargbo R."/>
            <person name="Orry A."/>
            <person name="Blei F."/>
            <person name="Naschberger A."/>
            <person name="Rupp B."/>
            <person name="Hoffmeister D."/>
        </authorList>
    </citation>
    <scope>FUNCTION</scope>
    <scope>CATALYTIC ACTIVITY</scope>
</reference>
<accession>P0DPA6</accession>
<gene>
    <name evidence="4" type="primary">psiD</name>
</gene>